<name>SWS_DROWI</name>
<feature type="chain" id="PRO_0000389228" description="Neuropathy target esterase sws">
    <location>
        <begin position="1"/>
        <end position="1481"/>
    </location>
</feature>
<feature type="topological domain" description="Lumenal" evidence="3">
    <location>
        <begin position="1"/>
        <end position="34"/>
    </location>
</feature>
<feature type="transmembrane region" description="Helical" evidence="3">
    <location>
        <begin position="35"/>
        <end position="55"/>
    </location>
</feature>
<feature type="topological domain" description="Cytoplasmic" evidence="3">
    <location>
        <begin position="56"/>
        <end position="1481"/>
    </location>
</feature>
<feature type="domain" description="PNPLA" evidence="4">
    <location>
        <begin position="967"/>
        <end position="1133"/>
    </location>
</feature>
<feature type="region of interest" description="Disordered" evidence="5">
    <location>
        <begin position="336"/>
        <end position="420"/>
    </location>
</feature>
<feature type="region of interest" description="Disordered" evidence="5">
    <location>
        <begin position="1366"/>
        <end position="1481"/>
    </location>
</feature>
<feature type="short sequence motif" description="GXGXXG" evidence="4">
    <location>
        <begin position="971"/>
        <end position="976"/>
    </location>
</feature>
<feature type="short sequence motif" description="GXSXG" evidence="4">
    <location>
        <begin position="998"/>
        <end position="1002"/>
    </location>
</feature>
<feature type="short sequence motif" description="DGA/G" evidence="4">
    <location>
        <begin position="1120"/>
        <end position="1122"/>
    </location>
</feature>
<feature type="compositionally biased region" description="Low complexity" evidence="5">
    <location>
        <begin position="339"/>
        <end position="379"/>
    </location>
</feature>
<feature type="compositionally biased region" description="Low complexity" evidence="5">
    <location>
        <begin position="401"/>
        <end position="412"/>
    </location>
</feature>
<feature type="compositionally biased region" description="Basic and acidic residues" evidence="5">
    <location>
        <begin position="1379"/>
        <end position="1390"/>
    </location>
</feature>
<feature type="compositionally biased region" description="Basic and acidic residues" evidence="5">
    <location>
        <begin position="1400"/>
        <end position="1410"/>
    </location>
</feature>
<feature type="compositionally biased region" description="Low complexity" evidence="5">
    <location>
        <begin position="1445"/>
        <end position="1457"/>
    </location>
</feature>
<feature type="active site" description="Nucleophile" evidence="4">
    <location>
        <position position="1000"/>
    </location>
</feature>
<feature type="active site" description="Proton acceptor" evidence="4">
    <location>
        <position position="1120"/>
    </location>
</feature>
<feature type="binding site" evidence="3">
    <location>
        <begin position="175"/>
        <end position="302"/>
    </location>
    <ligand>
        <name>a nucleoside 3',5'-cyclic phosphate</name>
        <dbReference type="ChEBI" id="CHEBI:58464"/>
        <label>1</label>
    </ligand>
</feature>
<feature type="binding site" evidence="3">
    <location>
        <begin position="492"/>
        <end position="624"/>
    </location>
    <ligand>
        <name>a nucleoside 3',5'-cyclic phosphate</name>
        <dbReference type="ChEBI" id="CHEBI:58464"/>
        <label>2</label>
    </ligand>
</feature>
<feature type="binding site" evidence="3">
    <location>
        <begin position="613"/>
        <end position="740"/>
    </location>
    <ligand>
        <name>a nucleoside 3',5'-cyclic phosphate</name>
        <dbReference type="ChEBI" id="CHEBI:58464"/>
        <label>3</label>
    </ligand>
</feature>
<feature type="modified residue" description="Phosphoserine" evidence="2">
    <location>
        <position position="448"/>
    </location>
</feature>
<feature type="modified residue" description="Phosphoserine" evidence="2">
    <location>
        <position position="1214"/>
    </location>
</feature>
<reference evidence="6" key="1">
    <citation type="journal article" date="2007" name="Nature">
        <title>Evolution of genes and genomes on the Drosophila phylogeny.</title>
        <authorList>
            <consortium name="Drosophila 12 genomes consortium"/>
        </authorList>
    </citation>
    <scope>NUCLEOTIDE SEQUENCE [LARGE SCALE GENOMIC DNA]</scope>
    <source>
        <strain evidence="6">Tucson 14030-0811.24</strain>
    </source>
</reference>
<gene>
    <name evidence="2" type="primary">sws</name>
    <name type="ORF">GK16217</name>
</gene>
<accession>B4N1W9</accession>
<organism>
    <name type="scientific">Drosophila willistoni</name>
    <name type="common">Fruit fly</name>
    <dbReference type="NCBI Taxonomy" id="7260"/>
    <lineage>
        <taxon>Eukaryota</taxon>
        <taxon>Metazoa</taxon>
        <taxon>Ecdysozoa</taxon>
        <taxon>Arthropoda</taxon>
        <taxon>Hexapoda</taxon>
        <taxon>Insecta</taxon>
        <taxon>Pterygota</taxon>
        <taxon>Neoptera</taxon>
        <taxon>Endopterygota</taxon>
        <taxon>Diptera</taxon>
        <taxon>Brachycera</taxon>
        <taxon>Muscomorpha</taxon>
        <taxon>Ephydroidea</taxon>
        <taxon>Drosophilidae</taxon>
        <taxon>Drosophila</taxon>
        <taxon>Sophophora</taxon>
    </lineage>
</organism>
<protein>
    <recommendedName>
        <fullName evidence="2">Neuropathy target esterase sws</fullName>
    </recommendedName>
    <alternativeName>
        <fullName evidence="2">Swiss cheese</fullName>
        <ecNumber>3.1.1.5</ecNumber>
    </alternativeName>
</protein>
<sequence length="1481" mass="165348">MDVLELLRASANGCYNTIFSDAWSQYVSQQITSSLYLYIALGILTVLFVAWFIYFKRLARLRLRDEIARSLNAVTSASGGDLRGLRFRKRDKMLFYGRRMLRKMKNVSGQMYSSGKGYKRRAVMRFARRILQLRRENMPLEMRTVEPPAEYLEETIEGSDRVPPDALYMLQSIRIFGHFEKPVFLKLCKHTQVLELMAGDYLFKITDADDSVYIVQSGMINVYISNADGSTLSLKTVRKGESVTSLLSFIDVLSGNPSYYKTVTAKAMEKSVVIRLPMQAFEEVFRENPDVMIRVIQVIMIRLQRVLFTALRNYLGLNAELVQNHMRNKSITISGHLNSQSQSSQSMRQQTTATATGGTSATALGGQQLPAAVPSLPLQRQPPPPTIAPPLRHSREEHTLSGPNPNPNSGNNVQLPEVHGDAPNIDIYHQQQHGGSTSTGNLSTRRGSLVQPSIGGGGGGSTAQEGGCAAAGAPTIDMRLIQSSAVESLRKELGLPNEDAHIIEPFVEVRELEPNVTLITEGNADDVCIWFVMTGTLAVYQGVADATRSSTATTKSDKSDLLIHFVHPGEIVGGLAMLTGEASAYTIRSRNNSRVAYIRRAAIYQIMRQRPRIVLDLGNGVVRRLSPLVRQCDYALDWIFLESGRAVYRQDESSDSTYIVLSGRMRSVITNPGGKKEIVGEYGKGDLVGIVEMITETSRTTTVMAVRDSELAKLPEGLFNAIKLRYPIVVTKLISFLSHRFLGSMQTRGSTGAPGAPVEANPVTHKYSTVALVPITDEVPLTPFTYELYHSLCAIGPVLRLTSEVVRKQLGQNIFEAANEYRLTSWLAQQEDRNIITLYQCDNSLSPWTHRCMRQADVILIVGLGDRSHLVGKFEREIDRLAMRTQKELVLLYPETTNAKPANTLSWLNARPWVTKHHHVLCVKRIFTRKSQYRINDLYSRVLLSEPNMHSDFSRLARWLTGNSIGLVLGGGGARGAAHIGMLKAIQEAGIPIDMVGGVSIGALMGALWCSERNITTVTQKARQWSKKMTKWFLQLLDLTYPITSMFSGREFNKTIHDTFGDVSIEDLWIPYFTLTTDITASCHRIHTNGSLWRYVRSSMSLSGYMPPLCDPKDGHLLLDGGYVNNLPGHLWRYCRASMSIAGVFPPFCDYRDGHLLLDGCYTNNVPADVMHNLGAAHIIAIDVGSQDDTDLTNYGDDLSGWWLLYKKWNPFTSPVKVPDLPDIQSRLAYVSCVRQLEEVKNSDYCEYIRPPIDKYKTLAFGSFDEIRDVGYVFGKNYFESMAKAGRLGRFNQWFNKEPPKRGNHASLNEYTFIDLAQIVCKLPETYAVNTAEIFSEDEDCDGYISEPSTLNTDRRIQVPRAGNSLSLSEAEMDSDVEIDFRSDSKKDKATQSTPPAPGKDNEDKTDAVDRIPLLTLERPLTDQQQQHSDETDEQETPRAMKDGTNTMTTQTTSPTTDAGSEWAGSESELEKENKNVNTKN</sequence>
<comment type="function">
    <text evidence="2">Phospholipase B that deacylates intracellular phosphatidylcholine (PtdCho), generating glycerophosphocholine (GroPtdCho). This deacylation occurs at both sn-2 and sn-1 positions of PtdCho. Its specific chemical modification by certain organophosphorus (OP) compounds leads to distal axonopathy. Plays a role in the signaling mechanism between neurons and glia that regulates glia wrapping during development of the adult brain. Essential for membrane lipid homeostasis and cell survival in both neurons and glia of the adult brain (By similarity).</text>
</comment>
<comment type="catalytic activity">
    <reaction evidence="2">
        <text>a 1-acyl-sn-glycero-3-phosphocholine + H2O = sn-glycerol 3-phosphocholine + a fatty acid + H(+)</text>
        <dbReference type="Rhea" id="RHEA:15177"/>
        <dbReference type="ChEBI" id="CHEBI:15377"/>
        <dbReference type="ChEBI" id="CHEBI:15378"/>
        <dbReference type="ChEBI" id="CHEBI:16870"/>
        <dbReference type="ChEBI" id="CHEBI:28868"/>
        <dbReference type="ChEBI" id="CHEBI:58168"/>
        <dbReference type="EC" id="3.1.1.5"/>
    </reaction>
</comment>
<comment type="subunit">
    <text evidence="1">Interacts with Pka-C3; interaction inhibits the catalytic function of Pka-C3 and the esterase activity of sws.</text>
</comment>
<comment type="subcellular location">
    <subcellularLocation>
        <location evidence="2">Endoplasmic reticulum membrane</location>
        <topology evidence="2">Single-pass type I membrane protein</topology>
    </subcellularLocation>
    <text evidence="2">Sws tethers Pka-C3 to the membrane.</text>
</comment>
<comment type="similarity">
    <text evidence="3">Belongs to the NTE family.</text>
</comment>
<keyword id="KW-0217">Developmental protein</keyword>
<keyword id="KW-0256">Endoplasmic reticulum</keyword>
<keyword id="KW-0378">Hydrolase</keyword>
<keyword id="KW-0442">Lipid degradation</keyword>
<keyword id="KW-0443">Lipid metabolism</keyword>
<keyword id="KW-0472">Membrane</keyword>
<keyword id="KW-0524">Neurogenesis</keyword>
<keyword id="KW-0597">Phosphoprotein</keyword>
<keyword id="KW-1185">Reference proteome</keyword>
<keyword id="KW-0812">Transmembrane</keyword>
<keyword id="KW-1133">Transmembrane helix</keyword>
<evidence type="ECO:0000250" key="1"/>
<evidence type="ECO:0000250" key="2">
    <source>
        <dbReference type="UniProtKB" id="Q9U969"/>
    </source>
</evidence>
<evidence type="ECO:0000255" key="3"/>
<evidence type="ECO:0000255" key="4">
    <source>
        <dbReference type="PROSITE-ProRule" id="PRU01161"/>
    </source>
</evidence>
<evidence type="ECO:0000256" key="5">
    <source>
        <dbReference type="SAM" id="MobiDB-lite"/>
    </source>
</evidence>
<evidence type="ECO:0000312" key="6">
    <source>
        <dbReference type="EMBL" id="EDW78358.1"/>
    </source>
</evidence>
<proteinExistence type="inferred from homology"/>
<dbReference type="EC" id="3.1.1.5"/>
<dbReference type="EMBL" id="CH963925">
    <property type="protein sequence ID" value="EDW78358.1"/>
    <property type="molecule type" value="Genomic_DNA"/>
</dbReference>
<dbReference type="SMR" id="B4N1W9"/>
<dbReference type="STRING" id="7260.B4N1W9"/>
<dbReference type="GeneID" id="6644825"/>
<dbReference type="KEGG" id="dwi:6644825"/>
<dbReference type="CTD" id="31716"/>
<dbReference type="eggNOG" id="KOG2968">
    <property type="taxonomic scope" value="Eukaryota"/>
</dbReference>
<dbReference type="HOGENOM" id="CLU_000960_1_0_1"/>
<dbReference type="OMA" id="GQQEDRH"/>
<dbReference type="OrthoDB" id="421051at2759"/>
<dbReference type="PhylomeDB" id="B4N1W9"/>
<dbReference type="Proteomes" id="UP000007798">
    <property type="component" value="Unassembled WGS sequence"/>
</dbReference>
<dbReference type="GO" id="GO:0005789">
    <property type="term" value="C:endoplasmic reticulum membrane"/>
    <property type="evidence" value="ECO:0000250"/>
    <property type="project" value="UniProtKB"/>
</dbReference>
<dbReference type="GO" id="GO:0004622">
    <property type="term" value="F:lysophospholipase activity"/>
    <property type="evidence" value="ECO:0000250"/>
    <property type="project" value="UniProtKB"/>
</dbReference>
<dbReference type="GO" id="GO:0034349">
    <property type="term" value="P:glial cell apoptotic process"/>
    <property type="evidence" value="ECO:0000250"/>
    <property type="project" value="UniProtKB"/>
</dbReference>
<dbReference type="GO" id="GO:0016042">
    <property type="term" value="P:lipid catabolic process"/>
    <property type="evidence" value="ECO:0007669"/>
    <property type="project" value="UniProtKB-KW"/>
</dbReference>
<dbReference type="GO" id="GO:0006643">
    <property type="term" value="P:membrane lipid metabolic process"/>
    <property type="evidence" value="ECO:0000250"/>
    <property type="project" value="UniProtKB"/>
</dbReference>
<dbReference type="GO" id="GO:0061024">
    <property type="term" value="P:membrane organization"/>
    <property type="evidence" value="ECO:0000250"/>
    <property type="project" value="UniProtKB"/>
</dbReference>
<dbReference type="GO" id="GO:0007399">
    <property type="term" value="P:nervous system development"/>
    <property type="evidence" value="ECO:0007669"/>
    <property type="project" value="UniProtKB-KW"/>
</dbReference>
<dbReference type="GO" id="GO:0051402">
    <property type="term" value="P:neuron apoptotic process"/>
    <property type="evidence" value="ECO:0000250"/>
    <property type="project" value="UniProtKB"/>
</dbReference>
<dbReference type="GO" id="GO:0046470">
    <property type="term" value="P:phosphatidylcholine metabolic process"/>
    <property type="evidence" value="ECO:0000250"/>
    <property type="project" value="UniProtKB"/>
</dbReference>
<dbReference type="CDD" id="cd00038">
    <property type="entry name" value="CAP_ED"/>
    <property type="match status" value="3"/>
</dbReference>
<dbReference type="CDD" id="cd07225">
    <property type="entry name" value="Pat_PNPLA6_PNPLA7"/>
    <property type="match status" value="1"/>
</dbReference>
<dbReference type="FunFam" id="2.60.120.10:FF:000010">
    <property type="entry name" value="neuropathy target esterase isoform X1"/>
    <property type="match status" value="1"/>
</dbReference>
<dbReference type="FunFam" id="2.60.120.10:FF:000122">
    <property type="entry name" value="Neuropathy target esterase sws"/>
    <property type="match status" value="1"/>
</dbReference>
<dbReference type="FunFam" id="2.60.120.10:FF:000135">
    <property type="entry name" value="Neuropathy target esterase sws"/>
    <property type="match status" value="1"/>
</dbReference>
<dbReference type="FunFam" id="3.40.1090.10:FF:000022">
    <property type="entry name" value="Neuropathy target esterase sws"/>
    <property type="match status" value="1"/>
</dbReference>
<dbReference type="FunFam" id="3.40.1090.10:FF:000033">
    <property type="entry name" value="Neuropathy target esterase sws"/>
    <property type="match status" value="1"/>
</dbReference>
<dbReference type="Gene3D" id="3.40.1090.10">
    <property type="entry name" value="Cytosolic phospholipase A2 catalytic domain"/>
    <property type="match status" value="2"/>
</dbReference>
<dbReference type="Gene3D" id="2.60.120.10">
    <property type="entry name" value="Jelly Rolls"/>
    <property type="match status" value="3"/>
</dbReference>
<dbReference type="InterPro" id="IPR016035">
    <property type="entry name" value="Acyl_Trfase/lysoPLipase"/>
</dbReference>
<dbReference type="InterPro" id="IPR000595">
    <property type="entry name" value="cNMP-bd_dom"/>
</dbReference>
<dbReference type="InterPro" id="IPR018490">
    <property type="entry name" value="cNMP-bd_dom_sf"/>
</dbReference>
<dbReference type="InterPro" id="IPR001423">
    <property type="entry name" value="LysoPLipase_patatin_CS"/>
</dbReference>
<dbReference type="InterPro" id="IPR050301">
    <property type="entry name" value="NTE"/>
</dbReference>
<dbReference type="InterPro" id="IPR056556">
    <property type="entry name" value="NTE1_P-loop_dom"/>
</dbReference>
<dbReference type="InterPro" id="IPR002641">
    <property type="entry name" value="PNPLA_dom"/>
</dbReference>
<dbReference type="InterPro" id="IPR014710">
    <property type="entry name" value="RmlC-like_jellyroll"/>
</dbReference>
<dbReference type="PANTHER" id="PTHR14226:SF29">
    <property type="entry name" value="NEUROPATHY TARGET ESTERASE SWS"/>
    <property type="match status" value="1"/>
</dbReference>
<dbReference type="PANTHER" id="PTHR14226">
    <property type="entry name" value="NEUROPATHY TARGET ESTERASE/SWISS CHEESE D.MELANOGASTER"/>
    <property type="match status" value="1"/>
</dbReference>
<dbReference type="Pfam" id="PF00027">
    <property type="entry name" value="cNMP_binding"/>
    <property type="match status" value="3"/>
</dbReference>
<dbReference type="Pfam" id="PF24179">
    <property type="entry name" value="NTE_Ploop"/>
    <property type="match status" value="1"/>
</dbReference>
<dbReference type="Pfam" id="PF01734">
    <property type="entry name" value="Patatin"/>
    <property type="match status" value="1"/>
</dbReference>
<dbReference type="SMART" id="SM00100">
    <property type="entry name" value="cNMP"/>
    <property type="match status" value="3"/>
</dbReference>
<dbReference type="SUPFAM" id="SSF51206">
    <property type="entry name" value="cAMP-binding domain-like"/>
    <property type="match status" value="3"/>
</dbReference>
<dbReference type="SUPFAM" id="SSF52151">
    <property type="entry name" value="FabD/lysophospholipase-like"/>
    <property type="match status" value="2"/>
</dbReference>
<dbReference type="PROSITE" id="PS50042">
    <property type="entry name" value="CNMP_BINDING_3"/>
    <property type="match status" value="3"/>
</dbReference>
<dbReference type="PROSITE" id="PS51635">
    <property type="entry name" value="PNPLA"/>
    <property type="match status" value="1"/>
</dbReference>
<dbReference type="PROSITE" id="PS01237">
    <property type="entry name" value="UPF0028"/>
    <property type="match status" value="1"/>
</dbReference>